<dbReference type="EMBL" id="AC090431">
    <property type="status" value="NOT_ANNOTATED_CDS"/>
    <property type="molecule type" value="Genomic_DNA"/>
</dbReference>
<dbReference type="EMBL" id="AC093020">
    <property type="status" value="NOT_ANNOTATED_CDS"/>
    <property type="molecule type" value="Genomic_DNA"/>
</dbReference>
<dbReference type="EMBL" id="BC158046">
    <property type="protein sequence ID" value="AAI58047.1"/>
    <property type="molecule type" value="mRNA"/>
</dbReference>
<dbReference type="EMBL" id="BC158135">
    <property type="protein sequence ID" value="AAI58136.1"/>
    <property type="molecule type" value="mRNA"/>
</dbReference>
<dbReference type="EMBL" id="BC158138">
    <property type="protein sequence ID" value="AAI58139.1"/>
    <property type="molecule type" value="mRNA"/>
</dbReference>
<dbReference type="CCDS" id="CCDS36963.1"/>
<dbReference type="RefSeq" id="NP_808448.2">
    <property type="nucleotide sequence ID" value="NM_177780.3"/>
</dbReference>
<dbReference type="SMR" id="B2RY04"/>
<dbReference type="BioGRID" id="213063">
    <property type="interactions" value="5"/>
</dbReference>
<dbReference type="FunCoup" id="B2RY04">
    <property type="interactions" value="1302"/>
</dbReference>
<dbReference type="STRING" id="10090.ENSMUSP00000036674"/>
<dbReference type="BindingDB" id="B2RY04"/>
<dbReference type="ChEMBL" id="CHEMBL4739665"/>
<dbReference type="GlyGen" id="B2RY04">
    <property type="glycosylation" value="3 sites, 2 N-linked glycans (2 sites)"/>
</dbReference>
<dbReference type="iPTMnet" id="B2RY04"/>
<dbReference type="PhosphoSitePlus" id="B2RY04"/>
<dbReference type="jPOST" id="B2RY04"/>
<dbReference type="PaxDb" id="10090-ENSMUSP00000036674"/>
<dbReference type="PeptideAtlas" id="B2RY04"/>
<dbReference type="ProteomicsDB" id="279799"/>
<dbReference type="Pumba" id="B2RY04"/>
<dbReference type="Antibodypedia" id="2898">
    <property type="antibodies" value="81 antibodies from 15 providers"/>
</dbReference>
<dbReference type="Ensembl" id="ENSMUST00000039135.6">
    <property type="protein sequence ID" value="ENSMUSP00000036674.5"/>
    <property type="gene ID" value="ENSMUSG00000044447.6"/>
</dbReference>
<dbReference type="GeneID" id="68813"/>
<dbReference type="KEGG" id="mmu:68813"/>
<dbReference type="UCSC" id="uc007ull.1">
    <property type="organism name" value="mouse"/>
</dbReference>
<dbReference type="AGR" id="MGI:2652871"/>
<dbReference type="CTD" id="80005"/>
<dbReference type="MGI" id="MGI:2652871">
    <property type="gene designation" value="Dock5"/>
</dbReference>
<dbReference type="VEuPathDB" id="HostDB:ENSMUSG00000044447"/>
<dbReference type="eggNOG" id="KOG1998">
    <property type="taxonomic scope" value="Eukaryota"/>
</dbReference>
<dbReference type="GeneTree" id="ENSGT00940000157734"/>
<dbReference type="HOGENOM" id="CLU_000595_2_1_1"/>
<dbReference type="InParanoid" id="B2RY04"/>
<dbReference type="OMA" id="KPFHHSG"/>
<dbReference type="OrthoDB" id="18896at2759"/>
<dbReference type="PhylomeDB" id="B2RY04"/>
<dbReference type="TreeFam" id="TF300423"/>
<dbReference type="Reactome" id="R-MMU-9013149">
    <property type="pathway name" value="RAC1 GTPase cycle"/>
</dbReference>
<dbReference type="Reactome" id="R-MMU-9013408">
    <property type="pathway name" value="RHOG GTPase cycle"/>
</dbReference>
<dbReference type="Reactome" id="R-MMU-983231">
    <property type="pathway name" value="Factors involved in megakaryocyte development and platelet production"/>
</dbReference>
<dbReference type="BioGRID-ORCS" id="68813">
    <property type="hits" value="4 hits in 76 CRISPR screens"/>
</dbReference>
<dbReference type="ChiTaRS" id="Dock5">
    <property type="organism name" value="mouse"/>
</dbReference>
<dbReference type="PRO" id="PR:B2RY04"/>
<dbReference type="Proteomes" id="UP000000589">
    <property type="component" value="Chromosome 14"/>
</dbReference>
<dbReference type="RNAct" id="B2RY04">
    <property type="molecule type" value="protein"/>
</dbReference>
<dbReference type="Bgee" id="ENSMUSG00000044447">
    <property type="expression patterns" value="Expressed in epithelium of lens and 213 other cell types or tissues"/>
</dbReference>
<dbReference type="GO" id="GO:0070161">
    <property type="term" value="C:anchoring junction"/>
    <property type="evidence" value="ECO:0007669"/>
    <property type="project" value="UniProtKB-KW"/>
</dbReference>
<dbReference type="GO" id="GO:0042995">
    <property type="term" value="C:cell projection"/>
    <property type="evidence" value="ECO:0007669"/>
    <property type="project" value="UniProtKB-KW"/>
</dbReference>
<dbReference type="GO" id="GO:0005737">
    <property type="term" value="C:cytoplasm"/>
    <property type="evidence" value="ECO:0000314"/>
    <property type="project" value="UniProtKB"/>
</dbReference>
<dbReference type="GO" id="GO:0005829">
    <property type="term" value="C:cytosol"/>
    <property type="evidence" value="ECO:0007669"/>
    <property type="project" value="Ensembl"/>
</dbReference>
<dbReference type="GO" id="GO:0005886">
    <property type="term" value="C:plasma membrane"/>
    <property type="evidence" value="ECO:0000250"/>
    <property type="project" value="UniProtKB"/>
</dbReference>
<dbReference type="GO" id="GO:0002102">
    <property type="term" value="C:podosome"/>
    <property type="evidence" value="ECO:0000314"/>
    <property type="project" value="MGI"/>
</dbReference>
<dbReference type="GO" id="GO:0005096">
    <property type="term" value="F:GTPase activator activity"/>
    <property type="evidence" value="ECO:0007669"/>
    <property type="project" value="InterPro"/>
</dbReference>
<dbReference type="GO" id="GO:0005085">
    <property type="term" value="F:guanyl-nucleotide exchange factor activity"/>
    <property type="evidence" value="ECO:0000314"/>
    <property type="project" value="UniProtKB"/>
</dbReference>
<dbReference type="GO" id="GO:0046849">
    <property type="term" value="P:bone remodeling"/>
    <property type="evidence" value="ECO:0000315"/>
    <property type="project" value="MGI"/>
</dbReference>
<dbReference type="GO" id="GO:0016477">
    <property type="term" value="P:cell migration"/>
    <property type="evidence" value="ECO:0007669"/>
    <property type="project" value="InterPro"/>
</dbReference>
<dbReference type="GO" id="GO:1904694">
    <property type="term" value="P:negative regulation of vascular associated smooth muscle contraction"/>
    <property type="evidence" value="ECO:0007669"/>
    <property type="project" value="Ensembl"/>
</dbReference>
<dbReference type="GO" id="GO:0071800">
    <property type="term" value="P:podosome assembly"/>
    <property type="evidence" value="ECO:0000315"/>
    <property type="project" value="MGI"/>
</dbReference>
<dbReference type="GO" id="GO:0010634">
    <property type="term" value="P:positive regulation of epithelial cell migration"/>
    <property type="evidence" value="ECO:0000250"/>
    <property type="project" value="UniProtKB"/>
</dbReference>
<dbReference type="GO" id="GO:1900026">
    <property type="term" value="P:positive regulation of substrate adhesion-dependent cell spreading"/>
    <property type="evidence" value="ECO:0000250"/>
    <property type="project" value="UniProtKB"/>
</dbReference>
<dbReference type="GO" id="GO:1904754">
    <property type="term" value="P:positive regulation of vascular associated smooth muscle cell migration"/>
    <property type="evidence" value="ECO:0007669"/>
    <property type="project" value="Ensembl"/>
</dbReference>
<dbReference type="GO" id="GO:0016601">
    <property type="term" value="P:Rac protein signal transduction"/>
    <property type="evidence" value="ECO:0000314"/>
    <property type="project" value="MGI"/>
</dbReference>
<dbReference type="CDD" id="cd11708">
    <property type="entry name" value="DHR2_DOCK5"/>
    <property type="match status" value="1"/>
</dbReference>
<dbReference type="CDD" id="cd12051">
    <property type="entry name" value="SH3_DOCK1_5_A"/>
    <property type="match status" value="1"/>
</dbReference>
<dbReference type="FunFam" id="1.20.58.740:FF:000004">
    <property type="entry name" value="Dedicator of cytokinesis protein 1"/>
    <property type="match status" value="1"/>
</dbReference>
<dbReference type="FunFam" id="1.25.40.410:FF:000004">
    <property type="entry name" value="Dedicator of cytokinesis protein 1"/>
    <property type="match status" value="1"/>
</dbReference>
<dbReference type="FunFam" id="2.60.40.150:FF:000044">
    <property type="entry name" value="dedicator of cytokinesis protein 1"/>
    <property type="match status" value="1"/>
</dbReference>
<dbReference type="FunFam" id="2.30.30.40:FF:000057">
    <property type="entry name" value="Dedicator of cytokinesis protein 4"/>
    <property type="match status" value="1"/>
</dbReference>
<dbReference type="FunFam" id="1.20.1270.350:FF:000001">
    <property type="entry name" value="dedicator of cytokinesis protein 4"/>
    <property type="match status" value="1"/>
</dbReference>
<dbReference type="Gene3D" id="1.20.58.740">
    <property type="match status" value="1"/>
</dbReference>
<dbReference type="Gene3D" id="1.25.40.410">
    <property type="match status" value="1"/>
</dbReference>
<dbReference type="Gene3D" id="2.60.40.150">
    <property type="entry name" value="C2 domain"/>
    <property type="match status" value="1"/>
</dbReference>
<dbReference type="Gene3D" id="1.20.1270.350">
    <property type="entry name" value="Dedicator of cytokinesis N-terminal subdomain"/>
    <property type="match status" value="1"/>
</dbReference>
<dbReference type="Gene3D" id="2.30.30.40">
    <property type="entry name" value="SH3 Domains"/>
    <property type="match status" value="1"/>
</dbReference>
<dbReference type="InterPro" id="IPR016024">
    <property type="entry name" value="ARM-type_fold"/>
</dbReference>
<dbReference type="InterPro" id="IPR027007">
    <property type="entry name" value="C2_DOCK-type_domain"/>
</dbReference>
<dbReference type="InterPro" id="IPR035892">
    <property type="entry name" value="C2_domain_sf"/>
</dbReference>
<dbReference type="InterPro" id="IPR030717">
    <property type="entry name" value="DHR2_DOCK5"/>
</dbReference>
<dbReference type="InterPro" id="IPR026791">
    <property type="entry name" value="DOCK"/>
</dbReference>
<dbReference type="InterPro" id="IPR047025">
    <property type="entry name" value="DOCK1_5_SH3"/>
</dbReference>
<dbReference type="InterPro" id="IPR043161">
    <property type="entry name" value="DOCK_C_lobe_A"/>
</dbReference>
<dbReference type="InterPro" id="IPR043162">
    <property type="entry name" value="DOCK_C_lobe_C"/>
</dbReference>
<dbReference type="InterPro" id="IPR032376">
    <property type="entry name" value="DOCK_N"/>
</dbReference>
<dbReference type="InterPro" id="IPR042455">
    <property type="entry name" value="DOCK_N_sub1"/>
</dbReference>
<dbReference type="InterPro" id="IPR027357">
    <property type="entry name" value="DOCKER_dom"/>
</dbReference>
<dbReference type="InterPro" id="IPR046769">
    <property type="entry name" value="DOCKER_Lobe_A"/>
</dbReference>
<dbReference type="InterPro" id="IPR046770">
    <property type="entry name" value="DOCKER_Lobe_B"/>
</dbReference>
<dbReference type="InterPro" id="IPR046773">
    <property type="entry name" value="DOCKER_Lobe_C"/>
</dbReference>
<dbReference type="InterPro" id="IPR036028">
    <property type="entry name" value="SH3-like_dom_sf"/>
</dbReference>
<dbReference type="InterPro" id="IPR001452">
    <property type="entry name" value="SH3_domain"/>
</dbReference>
<dbReference type="InterPro" id="IPR056372">
    <property type="entry name" value="TPR_DOCK"/>
</dbReference>
<dbReference type="PANTHER" id="PTHR45653">
    <property type="entry name" value="DEDICATOR OF CYTOKINESIS"/>
    <property type="match status" value="1"/>
</dbReference>
<dbReference type="PANTHER" id="PTHR45653:SF3">
    <property type="entry name" value="DEDICATOR OF CYTOKINESIS PROTEIN 5"/>
    <property type="match status" value="1"/>
</dbReference>
<dbReference type="Pfam" id="PF06920">
    <property type="entry name" value="DHR-2_Lobe_A"/>
    <property type="match status" value="1"/>
</dbReference>
<dbReference type="Pfam" id="PF20422">
    <property type="entry name" value="DHR-2_Lobe_B"/>
    <property type="match status" value="1"/>
</dbReference>
<dbReference type="Pfam" id="PF20421">
    <property type="entry name" value="DHR-2_Lobe_C"/>
    <property type="match status" value="1"/>
</dbReference>
<dbReference type="Pfam" id="PF14429">
    <property type="entry name" value="DOCK-C2"/>
    <property type="match status" value="1"/>
</dbReference>
<dbReference type="Pfam" id="PF16172">
    <property type="entry name" value="DOCK_N"/>
    <property type="match status" value="1"/>
</dbReference>
<dbReference type="Pfam" id="PF00018">
    <property type="entry name" value="SH3_1"/>
    <property type="match status" value="1"/>
</dbReference>
<dbReference type="Pfam" id="PF23554">
    <property type="entry name" value="TPR_DOCK"/>
    <property type="match status" value="1"/>
</dbReference>
<dbReference type="SMART" id="SM00326">
    <property type="entry name" value="SH3"/>
    <property type="match status" value="1"/>
</dbReference>
<dbReference type="SUPFAM" id="SSF48371">
    <property type="entry name" value="ARM repeat"/>
    <property type="match status" value="1"/>
</dbReference>
<dbReference type="SUPFAM" id="SSF50044">
    <property type="entry name" value="SH3-domain"/>
    <property type="match status" value="1"/>
</dbReference>
<dbReference type="PROSITE" id="PS51650">
    <property type="entry name" value="C2_DOCK"/>
    <property type="match status" value="1"/>
</dbReference>
<dbReference type="PROSITE" id="PS51651">
    <property type="entry name" value="DOCKER"/>
    <property type="match status" value="1"/>
</dbReference>
<dbReference type="PROSITE" id="PS50002">
    <property type="entry name" value="SH3"/>
    <property type="match status" value="1"/>
</dbReference>
<comment type="function">
    <text evidence="3 8">Guanine nucleotide exchange factor (GEF) for Rho and Rac. GEF proteins activate small GTPases by exchanging bound GDP for free GTP (PubMed:18396277). Along with DOCK1, mediates CRK/CRKL regulation of epithelial and endothelial cell spreading and migration on type IV collagen (By similarity).</text>
</comment>
<comment type="subunit">
    <text evidence="3 9">Interacts with CRK and CRKL (By similarity). Interacts (via N-terminus) with tensin TNS3 (via N-terminus); the interaction increases DOCK5 guanine nucleotide exchange activity towards Rac (PubMed:27505886). Interacts with ELMO1 (PubMed:27505886).</text>
</comment>
<comment type="subcellular location">
    <subcellularLocation>
        <location evidence="8">Cytoplasm</location>
    </subcellularLocation>
    <subcellularLocation>
        <location evidence="3">Cell membrane</location>
    </subcellularLocation>
    <subcellularLocation>
        <location evidence="9">Cell projection</location>
        <location evidence="9">Podosome</location>
    </subcellularLocation>
    <text evidence="3">Associated with the edge of the plasma membrane in intestinal epithelial cells spreading on type IV collagen.</text>
</comment>
<comment type="tissue specificity">
    <text evidence="8">Highly expressed in lens, where it predominantly localizes to anterior epithelial cells, and is weakly expressed in lens fiber (at protein level). Expressed in brain, eye, lung, spleen and kidney, but not in thymus or peripheral blood leukocytes.</text>
</comment>
<comment type="developmental stage">
    <text evidence="8 9">In the lens, expressed from 15.5 dpc to maturity (PubMed:18396277). Expression increases during osteoclast differentiation (PubMed:27505886).</text>
</comment>
<comment type="domain">
    <text evidence="1">The DOCKER domain may mediate some GEF activity.</text>
</comment>
<comment type="disease">
    <text evidence="10 11">Defects in Dock5 are the cause of rupture of lens cataract. It affects both eyes and is inherited as an autosomal recessive trait. Homozygotes spontaneously develop opacity of the lens at 35-60 days of age. The initial pathological changes appear at about 35 days of age in the deep layer of the posterior cortex as irregular swelling, condensation, degeneration and fragmentation of the lens fibers, leading to rupture of the lens capsule at the posterior pole at 45-100 days of age. Following rupture, the lens nucleus becomes dislocated behind the lens or occasionally in the anterior chamber.</text>
</comment>
<comment type="similarity">
    <text evidence="5">Belongs to the DOCK family.</text>
</comment>
<accession>B2RY04</accession>
<accession>E9QLI4</accession>
<sequence>MARWIPTKRQKYGVAIYNYNASQDVELSLQIGDTVHILEMYEGWYRGYALQNRSKKGIFPETYIHLKEATVEDGGQHETVIPGELPLVQELTNTLREWAVIWRKLYVNNKVTLFRQLQQMTYSLIEWRSQILSGTLPKDELAELKKKVTAKIDHGNRMLGLDLVVRDDNGNILDPDETSTVALFRAHEVASKRIEEKIQEEKSILQNLDLRGQAIFSTVHTYGLYVNFKNFVCNIGEDAELFIALYDPDQSTFISENYLIRWGSNGMPKEIEKLNNLQAVFTDLSSTDLIRPRISLVCQIVRVGRMELKEGKKHTCGLRRPFGVAVMDISDIVHGKVDDEEKQHFIPFQQIAMETYIRQRQLIMSPLITSHVIGENEPLTSVLNKVIAAKEVNHKGQGLWVSLKLLPGDLTQVQKNFSHLVDRSTAIARKMGFPEIILPGDVRNDIYVTLIHGEFDKGKKKTPKNVEVTMSVFDEEGNLLEKAIHPGAGYEGVSEYKSVVYYQVKQPCWYETVKVFIAIEEVTRCHIRFTFRHRSSQESRDKSERAFGVAFVKLMNADGTTLQDGRHDLVVYKGDNKKMEDAKYYLTLPGTKAELEEKELQASKNPSVFTPSKDSTKDSFQIATLICSTKLTQNVDLLGLLNWRSNSQNIKHNLKKLMEVDGGEIVKFLQDTLDALFNIMMEMSDNETYDFLVFDALVFIISLIGDIKFQHFNPVLETYIYKHFSATLAHVKLSKVLNFYVANAEDPSKTELLFAALKALKYLFRFIIQSRVLYLRFYGQSEDGDEFNDSIRQLFLAFNTLMDRPLEEAVKIKGAALKYLPSIINDVKLVFDPMELSVLFCKFIQSIPDNQLVRQKLNCMTKIVESSLFQQAECREVLLPLLTDQLSGQLDDHSTKPDHEASSQLLSNILEVLDRTDVGPTSAHVQLIMERLLRRINRTVIGMSRQSPHIGSFVACMIAVLRQMEDSHYSHYISTFKTRQDIIDFLMETFIMFKDLIGKNVYAKDWMVMNMTQNRVFLRAINQFAEVLTKSFMDQASFELQLWNNYFHLAVAFLTHESLQLETFSEAKRNKIVKKYGDMRKEIGFRIRDMWYNLGPHKIKFIPSMVGPILEVTLTPEVELRKATIPIFFDMMQCEFNLSGNGNFHMFENELITKLDQEVEGGRGDEQYKVLLEKLLLEHCRKHKYLANSGEAFAFLVSSLLENLLDYRTIIIHDESKENRMSCTVNVLNFYKDKKREDIYIRYLYKLRDLHRDCENYTEAAYTLLLHAELLQWSDKPCVPHLLQRDSYYVYTQQELKEKLYQEIISYFDKGKMWEKAIKLSKELAETYESKVFDYEGLGSLLKKRALFYENIIKAMRPQPEYFAVGYYGQGFPSFLRNKIFIYRGKEYERREDFSLRLLTQFPNAEKMTSTTPPGEDIKSSPKQYLQCFTVKPVMSLPPSYKDKPVPEQILNYYRANEVQQFSYSRPFRKGEKDPENEFATMWIERTTYRTAYTFPGILKWFEAKEISVEEISPLENAIETMELTNERVSNCVQQHAWDHSLSVHPLSMLLSGIVDPAVMGGFSNYEKAFFTEKYLQEHPEDQEKVELLKRLIALQIPLLTEGIRIHGEKLTEQLKPLHARLSSCFRELKEKVEKLYGVITLPPSMTERKPSRAGSMVLPYILSSTLRRLSVTSVASSVISTSSNSSDNASSRPGSDGSILEPLFERRASSGARVEDLPPKEDSENRISKFKRKDWNLSKSQVIAEKAPEPDVMSPGKKTQRPKSLQLVDSRLTPFHSPSPLQSTALSPPPLTPKATRTLSSPSLQTDGLTASVPPPPPPKSKPYESSQRNSAEIAPPLPVRRDSKAPPPPPPKARKSGILSSEPGSQ</sequence>
<name>DOCK5_MOUSE</name>
<reference key="1">
    <citation type="journal article" date="2009" name="PLoS Biol.">
        <title>Lineage-specific biology revealed by a finished genome assembly of the mouse.</title>
        <authorList>
            <person name="Church D.M."/>
            <person name="Goodstadt L."/>
            <person name="Hillier L.W."/>
            <person name="Zody M.C."/>
            <person name="Goldstein S."/>
            <person name="She X."/>
            <person name="Bult C.J."/>
            <person name="Agarwala R."/>
            <person name="Cherry J.L."/>
            <person name="DiCuccio M."/>
            <person name="Hlavina W."/>
            <person name="Kapustin Y."/>
            <person name="Meric P."/>
            <person name="Maglott D."/>
            <person name="Birtle Z."/>
            <person name="Marques A.C."/>
            <person name="Graves T."/>
            <person name="Zhou S."/>
            <person name="Teague B."/>
            <person name="Potamousis K."/>
            <person name="Churas C."/>
            <person name="Place M."/>
            <person name="Herschleb J."/>
            <person name="Runnheim R."/>
            <person name="Forrest D."/>
            <person name="Amos-Landgraf J."/>
            <person name="Schwartz D.C."/>
            <person name="Cheng Z."/>
            <person name="Lindblad-Toh K."/>
            <person name="Eichler E.E."/>
            <person name="Ponting C.P."/>
        </authorList>
    </citation>
    <scope>NUCLEOTIDE SEQUENCE [LARGE SCALE GENOMIC DNA]</scope>
    <source>
        <strain>C57BL/6J</strain>
    </source>
</reference>
<reference evidence="15" key="2">
    <citation type="journal article" date="2004" name="Genome Res.">
        <title>The status, quality, and expansion of the NIH full-length cDNA project: the Mammalian Gene Collection (MGC).</title>
        <authorList>
            <consortium name="The MGC Project Team"/>
        </authorList>
    </citation>
    <scope>NUCLEOTIDE SEQUENCE [LARGE SCALE MRNA]</scope>
</reference>
<reference evidence="14" key="3">
    <citation type="journal article" date="1997" name="Exp. Eye Res.">
        <title>Rupture of lens cataract: a novel hereditary recessive cataract model in the mouse.</title>
        <authorList>
            <person name="Iida F."/>
            <person name="Matsushima Y."/>
            <person name="Hiai H."/>
            <person name="Uga S."/>
            <person name="Honda Y."/>
        </authorList>
    </citation>
    <scope>DISEASE</scope>
</reference>
<reference evidence="14" key="4">
    <citation type="journal article" date="1997" name="Lab. Anim.">
        <title>A new hereditary cataract mouse with lens rupture.</title>
        <authorList>
            <person name="Song C.-W."/>
            <person name="Okumoto M."/>
            <person name="Mori N."/>
            <person name="Yamate J."/>
            <person name="Sakuma S."/>
            <person name="Kim J.-S."/>
            <person name="Han S.-S."/>
            <person name="Hilgers J."/>
            <person name="Esaki K."/>
        </authorList>
    </citation>
    <scope>DISEASE</scope>
</reference>
<reference evidence="14" key="5">
    <citation type="journal article" date="2008" name="Exp. Eye Res.">
        <title>Mutation of Dock5, a member of the guanine exchange factor Dock180 superfamily, in the rupture of lens cataract mouse.</title>
        <authorList>
            <person name="Omi N."/>
            <person name="Kiyokawa E."/>
            <person name="Matsuda M."/>
            <person name="Kinoshita K."/>
            <person name="Yamada S."/>
            <person name="Yamada K."/>
            <person name="Matsushima Y."/>
            <person name="Wang Y."/>
            <person name="Kawai J."/>
            <person name="Suzuki M."/>
            <person name="Hayashizaki Y."/>
            <person name="Hiai H."/>
        </authorList>
    </citation>
    <scope>FUNCTION</scope>
    <scope>SUBCELLULAR LOCATION</scope>
    <scope>TISSUE SPECIFICITY</scope>
    <scope>DEVELOPMENTAL STAGE</scope>
</reference>
<reference key="6">
    <citation type="journal article" date="2010" name="Cell">
        <title>A tissue-specific atlas of mouse protein phosphorylation and expression.</title>
        <authorList>
            <person name="Huttlin E.L."/>
            <person name="Jedrychowski M.P."/>
            <person name="Elias J.E."/>
            <person name="Goswami T."/>
            <person name="Rad R."/>
            <person name="Beausoleil S.A."/>
            <person name="Villen J."/>
            <person name="Haas W."/>
            <person name="Sowa M.E."/>
            <person name="Gygi S.P."/>
        </authorList>
    </citation>
    <scope>PHOSPHORYLATION [LARGE SCALE ANALYSIS] AT SER-1867</scope>
    <scope>IDENTIFICATION BY MASS SPECTROMETRY [LARGE SCALE ANALYSIS]</scope>
    <source>
        <tissue>Brain</tissue>
        <tissue>Kidney</tissue>
        <tissue>Lung</tissue>
        <tissue>Pancreas</tissue>
        <tissue>Spleen</tissue>
        <tissue>Testis</tissue>
    </source>
</reference>
<reference key="7">
    <citation type="journal article" date="2016" name="J. Cell Sci.">
        <title>Tensin 3 is a new partner of Dock5 that controls osteoclast podosome organization and activity.</title>
        <authorList>
            <person name="Touaitahuata H."/>
            <person name="Morel A."/>
            <person name="Urbach S."/>
            <person name="Mateos-Langerak J."/>
            <person name="de Rossi S."/>
            <person name="Blangy A."/>
        </authorList>
    </citation>
    <scope>INTERACTION WITH TNS3 AND ELMO1</scope>
    <scope>SUBCELLULAR LOCATION</scope>
    <scope>DEVELOPMENTAL STAGE</scope>
</reference>
<feature type="chain" id="PRO_0000358858" description="Dedicator of cytokinesis protein 5">
    <location>
        <begin position="1"/>
        <end position="1868"/>
    </location>
</feature>
<feature type="domain" description="SH3" evidence="4">
    <location>
        <begin position="8"/>
        <end position="69"/>
    </location>
</feature>
<feature type="domain" description="C2 DOCK-type" evidence="5">
    <location>
        <begin position="443"/>
        <end position="627"/>
    </location>
</feature>
<feature type="domain" description="DOCKER" evidence="6">
    <location>
        <begin position="1231"/>
        <end position="1642"/>
    </location>
</feature>
<feature type="region of interest" description="Disordered" evidence="7">
    <location>
        <begin position="1681"/>
        <end position="1730"/>
    </location>
</feature>
<feature type="region of interest" description="Disordered" evidence="7">
    <location>
        <begin position="1742"/>
        <end position="1868"/>
    </location>
</feature>
<feature type="compositionally biased region" description="Low complexity" evidence="7">
    <location>
        <begin position="1681"/>
        <end position="1692"/>
    </location>
</feature>
<feature type="compositionally biased region" description="Basic and acidic residues" evidence="7">
    <location>
        <begin position="1704"/>
        <end position="1728"/>
    </location>
</feature>
<feature type="compositionally biased region" description="Polar residues" evidence="7">
    <location>
        <begin position="1796"/>
        <end position="1810"/>
    </location>
</feature>
<feature type="modified residue" description="Phosphoserine" evidence="3">
    <location>
        <position position="365"/>
    </location>
</feature>
<feature type="modified residue" description="N6-acetyllysine" evidence="3">
    <location>
        <position position="818"/>
    </location>
</feature>
<feature type="modified residue" description="Phosphoserine" evidence="3">
    <location>
        <position position="1755"/>
    </location>
</feature>
<feature type="modified residue" description="Phosphoserine" evidence="3">
    <location>
        <position position="1765"/>
    </location>
</feature>
<feature type="modified residue" description="Phosphoserine" evidence="1">
    <location>
        <position position="1771"/>
    </location>
</feature>
<feature type="modified residue" description="Phosphoserine" evidence="2">
    <location>
        <position position="1784"/>
    </location>
</feature>
<feature type="modified residue" description="Phosphoserine" evidence="3">
    <location>
        <position position="1788"/>
    </location>
</feature>
<feature type="modified residue" description="Phosphothreonine" evidence="3">
    <location>
        <position position="1793"/>
    </location>
</feature>
<feature type="modified residue" description="Phosphoserine" evidence="3">
    <location>
        <position position="1832"/>
    </location>
</feature>
<feature type="modified residue" description="Phosphoserine" evidence="17">
    <location>
        <position position="1867"/>
    </location>
</feature>
<feature type="sequence conflict" description="In Ref. 2; AAI58047/AAI58136/AAI58139." evidence="14" ref="2">
    <original>A</original>
    <variation>R</variation>
    <location>
        <position position="49"/>
    </location>
</feature>
<keyword id="KW-0007">Acetylation</keyword>
<keyword id="KW-0898">Cataract</keyword>
<keyword id="KW-0965">Cell junction</keyword>
<keyword id="KW-1003">Cell membrane</keyword>
<keyword id="KW-0966">Cell projection</keyword>
<keyword id="KW-0963">Cytoplasm</keyword>
<keyword id="KW-0344">Guanine-nucleotide releasing factor</keyword>
<keyword id="KW-0472">Membrane</keyword>
<keyword id="KW-0597">Phosphoprotein</keyword>
<keyword id="KW-1185">Reference proteome</keyword>
<keyword id="KW-0728">SH3 domain</keyword>
<proteinExistence type="evidence at protein level"/>
<gene>
    <name evidence="16" type="primary">Dock5</name>
    <name evidence="13" type="synonym">Lr2</name>
    <name evidence="12" type="synonym">Rlc</name>
</gene>
<organism>
    <name type="scientific">Mus musculus</name>
    <name type="common">Mouse</name>
    <dbReference type="NCBI Taxonomy" id="10090"/>
    <lineage>
        <taxon>Eukaryota</taxon>
        <taxon>Metazoa</taxon>
        <taxon>Chordata</taxon>
        <taxon>Craniata</taxon>
        <taxon>Vertebrata</taxon>
        <taxon>Euteleostomi</taxon>
        <taxon>Mammalia</taxon>
        <taxon>Eutheria</taxon>
        <taxon>Euarchontoglires</taxon>
        <taxon>Glires</taxon>
        <taxon>Rodentia</taxon>
        <taxon>Myomorpha</taxon>
        <taxon>Muroidea</taxon>
        <taxon>Muridae</taxon>
        <taxon>Murinae</taxon>
        <taxon>Mus</taxon>
        <taxon>Mus</taxon>
    </lineage>
</organism>
<protein>
    <recommendedName>
        <fullName evidence="3">Dedicator of cytokinesis protein 5</fullName>
    </recommendedName>
    <alternativeName>
        <fullName>Lens rupture protein 2</fullName>
    </alternativeName>
    <alternativeName>
        <fullName>Rupture of lens cataract protein</fullName>
    </alternativeName>
</protein>
<evidence type="ECO:0000250" key="1">
    <source>
        <dbReference type="UniProtKB" id="Q14185"/>
    </source>
</evidence>
<evidence type="ECO:0000250" key="2">
    <source>
        <dbReference type="UniProtKB" id="Q8BUR4"/>
    </source>
</evidence>
<evidence type="ECO:0000250" key="3">
    <source>
        <dbReference type="UniProtKB" id="Q9H7D0"/>
    </source>
</evidence>
<evidence type="ECO:0000255" key="4">
    <source>
        <dbReference type="PROSITE-ProRule" id="PRU00192"/>
    </source>
</evidence>
<evidence type="ECO:0000255" key="5">
    <source>
        <dbReference type="PROSITE-ProRule" id="PRU00983"/>
    </source>
</evidence>
<evidence type="ECO:0000255" key="6">
    <source>
        <dbReference type="PROSITE-ProRule" id="PRU00984"/>
    </source>
</evidence>
<evidence type="ECO:0000256" key="7">
    <source>
        <dbReference type="SAM" id="MobiDB-lite"/>
    </source>
</evidence>
<evidence type="ECO:0000269" key="8">
    <source>
    </source>
</evidence>
<evidence type="ECO:0000269" key="9">
    <source>
    </source>
</evidence>
<evidence type="ECO:0000269" key="10">
    <source>
    </source>
</evidence>
<evidence type="ECO:0000269" key="11">
    <source>
    </source>
</evidence>
<evidence type="ECO:0000303" key="12">
    <source>
    </source>
</evidence>
<evidence type="ECO:0000303" key="13">
    <source>
    </source>
</evidence>
<evidence type="ECO:0000305" key="14"/>
<evidence type="ECO:0000312" key="15">
    <source>
        <dbReference type="EMBL" id="AAI58047.1"/>
    </source>
</evidence>
<evidence type="ECO:0000312" key="16">
    <source>
        <dbReference type="MGI" id="MGI:2652871"/>
    </source>
</evidence>
<evidence type="ECO:0007744" key="17">
    <source>
    </source>
</evidence>